<feature type="chain" id="PRO_0000383145" description="Proline--tRNA ligase">
    <location>
        <begin position="1"/>
        <end position="501"/>
    </location>
</feature>
<accession>Q8SSD7</accession>
<proteinExistence type="evidence at protein level"/>
<reference key="1">
    <citation type="journal article" date="2001" name="Nature">
        <title>Genome sequence and gene compaction of the eukaryote parasite Encephalitozoon cuniculi.</title>
        <authorList>
            <person name="Katinka M.D."/>
            <person name="Duprat S."/>
            <person name="Cornillot E."/>
            <person name="Metenier G."/>
            <person name="Thomarat F."/>
            <person name="Prensier G."/>
            <person name="Barbe V."/>
            <person name="Peyretaillade E."/>
            <person name="Brottier P."/>
            <person name="Wincker P."/>
            <person name="Delbac F."/>
            <person name="El Alaoui H."/>
            <person name="Peyret P."/>
            <person name="Saurin W."/>
            <person name="Gouy M."/>
            <person name="Weissenbach J."/>
            <person name="Vivares C.P."/>
        </authorList>
    </citation>
    <scope>NUCLEOTIDE SEQUENCE [LARGE SCALE GENOMIC DNA]</scope>
    <source>
        <strain>GB-M1</strain>
    </source>
</reference>
<reference key="2">
    <citation type="journal article" date="2009" name="BMC Genomics">
        <title>Identification of transcriptional signals in Encephalitozoon cuniculi widespread among Microsporidia phylum: support for accurate structural genome annotation.</title>
        <authorList>
            <person name="Peyretaillade E."/>
            <person name="Goncalves O."/>
            <person name="Terrat S."/>
            <person name="Dugat-Bony E."/>
            <person name="Wincker P."/>
            <person name="Cornman R.S."/>
            <person name="Evans J.D."/>
            <person name="Delbac F."/>
            <person name="Peyret P."/>
        </authorList>
    </citation>
    <scope>GENOME REANNOTATION</scope>
    <source>
        <strain>GB-M1</strain>
    </source>
</reference>
<reference key="3">
    <citation type="journal article" date="2006" name="Proteomics">
        <title>Proteomic analysis of the eukaryotic parasite Encephalitozoon cuniculi (microsporidia): a reference map for proteins expressed in late sporogonial stages.</title>
        <authorList>
            <person name="Brosson D."/>
            <person name="Kuhn L."/>
            <person name="Delbac F."/>
            <person name="Garin J."/>
            <person name="Vivares C.P."/>
            <person name="Texier C."/>
        </authorList>
    </citation>
    <scope>IDENTIFICATION BY MASS SPECTROMETRY [LARGE SCALE ANALYSIS]</scope>
    <scope>DEVELOPMENTAL STAGE</scope>
</reference>
<name>SYP_ENCCU</name>
<evidence type="ECO:0000269" key="1">
    <source>
    </source>
</evidence>
<evidence type="ECO:0000305" key="2"/>
<gene>
    <name type="ordered locus">ECU02_1360</name>
</gene>
<organism>
    <name type="scientific">Encephalitozoon cuniculi (strain GB-M1)</name>
    <name type="common">Microsporidian parasite</name>
    <dbReference type="NCBI Taxonomy" id="284813"/>
    <lineage>
        <taxon>Eukaryota</taxon>
        <taxon>Fungi</taxon>
        <taxon>Fungi incertae sedis</taxon>
        <taxon>Microsporidia</taxon>
        <taxon>Unikaryonidae</taxon>
        <taxon>Encephalitozoon</taxon>
    </lineage>
</organism>
<sequence length="501" mass="56632">MDKQKFGLTAKKEEDFSEWYVQVITKGEMIDYYAIKGCYVMRPLGQFVWKCIHKWFTKKIEELGVQECYFPMLVPKSMLEMEKDHVENFSPEVAWITKCGNQVLEDPVAVRPTSETIIYPSFSKWIRSHRDLPLKLNQWCSVLRWELHGTLPFIRGKEFLWQEGHTAFLTRKESDEEVLAILDLYSQIYSELLAVPVIKGRKSENEKFGGADYTTSIEAFIPGSGRGVQAATSHSLGQNFSRMFDIKADTDEGSESSSFVYQNSWGITTRSIGIAAMIHSDNLGLVLPPRVAMTQVVIVPCGITTASSKDDTESLRAYINGVCVQLKNSGVRVHLDDRSNVTAGFKFNHWEIRGVPLRLEIGFKDMASSEACLVRRDTRAKKQVSVEGIAHTVMEEIDTMHNDMLARATSERDSRISYVKSFEEFMSALDNKNIIMAPWCGISECEIEIKSRSTRADPRSDVVSTGAKTLCIPYGSKPCDGMKCINCNSQAVHYTLFGRSY</sequence>
<comment type="catalytic activity">
    <reaction>
        <text>tRNA(Pro) + L-proline + ATP = L-prolyl-tRNA(Pro) + AMP + diphosphate</text>
        <dbReference type="Rhea" id="RHEA:14305"/>
        <dbReference type="Rhea" id="RHEA-COMP:9700"/>
        <dbReference type="Rhea" id="RHEA-COMP:9702"/>
        <dbReference type="ChEBI" id="CHEBI:30616"/>
        <dbReference type="ChEBI" id="CHEBI:33019"/>
        <dbReference type="ChEBI" id="CHEBI:60039"/>
        <dbReference type="ChEBI" id="CHEBI:78442"/>
        <dbReference type="ChEBI" id="CHEBI:78532"/>
        <dbReference type="ChEBI" id="CHEBI:456215"/>
        <dbReference type="EC" id="6.1.1.15"/>
    </reaction>
</comment>
<comment type="developmental stage">
    <text evidence="1">Expressed in late sporogonial stages.</text>
</comment>
<comment type="similarity">
    <text evidence="2">Belongs to the class-II aminoacyl-tRNA synthetase family.</text>
</comment>
<protein>
    <recommendedName>
        <fullName>Proline--tRNA ligase</fullName>
        <ecNumber>6.1.1.15</ecNumber>
    </recommendedName>
    <alternativeName>
        <fullName>Prolyl-tRNA synthetase</fullName>
        <shortName>ProRS</shortName>
    </alternativeName>
</protein>
<keyword id="KW-0030">Aminoacyl-tRNA synthetase</keyword>
<keyword id="KW-0067">ATP-binding</keyword>
<keyword id="KW-0436">Ligase</keyword>
<keyword id="KW-0547">Nucleotide-binding</keyword>
<keyword id="KW-0648">Protein biosynthesis</keyword>
<keyword id="KW-1185">Reference proteome</keyword>
<dbReference type="EC" id="6.1.1.15"/>
<dbReference type="EMBL" id="AL590442">
    <property type="protein sequence ID" value="CAD25165.2"/>
    <property type="molecule type" value="Genomic_DNA"/>
</dbReference>
<dbReference type="RefSeq" id="NP_584661.2">
    <property type="nucleotide sequence ID" value="NM_001040850.2"/>
</dbReference>
<dbReference type="SMR" id="Q8SSD7"/>
<dbReference type="FunCoup" id="Q8SSD7">
    <property type="interactions" value="39"/>
</dbReference>
<dbReference type="STRING" id="284813.Q8SSD7"/>
<dbReference type="GeneID" id="858651"/>
<dbReference type="KEGG" id="ecu:ECU02_1360"/>
<dbReference type="VEuPathDB" id="MicrosporidiaDB:ECU02_1360"/>
<dbReference type="HOGENOM" id="CLU_001882_4_1_1"/>
<dbReference type="InParanoid" id="Q8SSD7"/>
<dbReference type="OrthoDB" id="1350766at2759"/>
<dbReference type="Proteomes" id="UP000000819">
    <property type="component" value="Chromosome II"/>
</dbReference>
<dbReference type="GO" id="GO:0017101">
    <property type="term" value="C:aminoacyl-tRNA synthetase multienzyme complex"/>
    <property type="evidence" value="ECO:0007669"/>
    <property type="project" value="TreeGrafter"/>
</dbReference>
<dbReference type="GO" id="GO:0005737">
    <property type="term" value="C:cytoplasm"/>
    <property type="evidence" value="ECO:0007669"/>
    <property type="project" value="InterPro"/>
</dbReference>
<dbReference type="GO" id="GO:0005524">
    <property type="term" value="F:ATP binding"/>
    <property type="evidence" value="ECO:0007669"/>
    <property type="project" value="UniProtKB-KW"/>
</dbReference>
<dbReference type="GO" id="GO:0004827">
    <property type="term" value="F:proline-tRNA ligase activity"/>
    <property type="evidence" value="ECO:0007669"/>
    <property type="project" value="UniProtKB-EC"/>
</dbReference>
<dbReference type="GO" id="GO:0006433">
    <property type="term" value="P:prolyl-tRNA aminoacylation"/>
    <property type="evidence" value="ECO:0007669"/>
    <property type="project" value="InterPro"/>
</dbReference>
<dbReference type="CDD" id="cd00862">
    <property type="entry name" value="ProRS_anticodon_zinc"/>
    <property type="match status" value="1"/>
</dbReference>
<dbReference type="CDD" id="cd00778">
    <property type="entry name" value="ProRS_core_arch_euk"/>
    <property type="match status" value="1"/>
</dbReference>
<dbReference type="FunFam" id="3.30.110.30:FF:000001">
    <property type="entry name" value="Bifunctional glutamate/proline--tRNA ligase"/>
    <property type="match status" value="1"/>
</dbReference>
<dbReference type="FunFam" id="3.40.50.800:FF:000005">
    <property type="entry name" value="bifunctional glutamate/proline--tRNA ligase"/>
    <property type="match status" value="1"/>
</dbReference>
<dbReference type="FunFam" id="3.30.930.10:FF:000037">
    <property type="entry name" value="Proline--tRNA ligase"/>
    <property type="match status" value="1"/>
</dbReference>
<dbReference type="Gene3D" id="3.40.50.800">
    <property type="entry name" value="Anticodon-binding domain"/>
    <property type="match status" value="1"/>
</dbReference>
<dbReference type="Gene3D" id="3.30.930.10">
    <property type="entry name" value="Bira Bifunctional Protein, Domain 2"/>
    <property type="match status" value="1"/>
</dbReference>
<dbReference type="Gene3D" id="3.30.110.30">
    <property type="entry name" value="C-terminal domain of ProRS"/>
    <property type="match status" value="1"/>
</dbReference>
<dbReference type="HAMAP" id="MF_01571">
    <property type="entry name" value="Pro_tRNA_synth_type3"/>
    <property type="match status" value="1"/>
</dbReference>
<dbReference type="InterPro" id="IPR002314">
    <property type="entry name" value="aa-tRNA-synt_IIb"/>
</dbReference>
<dbReference type="InterPro" id="IPR006195">
    <property type="entry name" value="aa-tRNA-synth_II"/>
</dbReference>
<dbReference type="InterPro" id="IPR045864">
    <property type="entry name" value="aa-tRNA-synth_II/BPL/LPL"/>
</dbReference>
<dbReference type="InterPro" id="IPR004154">
    <property type="entry name" value="Anticodon-bd"/>
</dbReference>
<dbReference type="InterPro" id="IPR036621">
    <property type="entry name" value="Anticodon-bd_dom_sf"/>
</dbReference>
<dbReference type="InterPro" id="IPR002316">
    <property type="entry name" value="Pro-tRNA-ligase_IIa"/>
</dbReference>
<dbReference type="InterPro" id="IPR004499">
    <property type="entry name" value="Pro-tRNA-ligase_IIa_arc-type"/>
</dbReference>
<dbReference type="InterPro" id="IPR016061">
    <property type="entry name" value="Pro-tRNA_ligase_II_C"/>
</dbReference>
<dbReference type="InterPro" id="IPR017449">
    <property type="entry name" value="Pro-tRNA_synth_II"/>
</dbReference>
<dbReference type="InterPro" id="IPR033721">
    <property type="entry name" value="ProRS_core_arch_euk"/>
</dbReference>
<dbReference type="NCBIfam" id="TIGR00408">
    <property type="entry name" value="proS_fam_I"/>
    <property type="match status" value="1"/>
</dbReference>
<dbReference type="PANTHER" id="PTHR43382:SF2">
    <property type="entry name" value="BIFUNCTIONAL GLUTAMATE_PROLINE--TRNA LIGASE"/>
    <property type="match status" value="1"/>
</dbReference>
<dbReference type="PANTHER" id="PTHR43382">
    <property type="entry name" value="PROLYL-TRNA SYNTHETASE"/>
    <property type="match status" value="1"/>
</dbReference>
<dbReference type="Pfam" id="PF03129">
    <property type="entry name" value="HGTP_anticodon"/>
    <property type="match status" value="1"/>
</dbReference>
<dbReference type="Pfam" id="PF09180">
    <property type="entry name" value="ProRS-C_1"/>
    <property type="match status" value="1"/>
</dbReference>
<dbReference type="Pfam" id="PF00587">
    <property type="entry name" value="tRNA-synt_2b"/>
    <property type="match status" value="1"/>
</dbReference>
<dbReference type="PRINTS" id="PR01046">
    <property type="entry name" value="TRNASYNTHPRO"/>
</dbReference>
<dbReference type="SMART" id="SM00946">
    <property type="entry name" value="ProRS-C_1"/>
    <property type="match status" value="1"/>
</dbReference>
<dbReference type="SUPFAM" id="SSF64586">
    <property type="entry name" value="C-terminal domain of ProRS"/>
    <property type="match status" value="1"/>
</dbReference>
<dbReference type="SUPFAM" id="SSF52954">
    <property type="entry name" value="Class II aaRS ABD-related"/>
    <property type="match status" value="1"/>
</dbReference>
<dbReference type="SUPFAM" id="SSF55681">
    <property type="entry name" value="Class II aaRS and biotin synthetases"/>
    <property type="match status" value="1"/>
</dbReference>
<dbReference type="PROSITE" id="PS50862">
    <property type="entry name" value="AA_TRNA_LIGASE_II"/>
    <property type="match status" value="1"/>
</dbReference>